<keyword id="KW-0131">Cell cycle</keyword>
<keyword id="KW-0132">Cell division</keyword>
<keyword id="KW-0997">Cell inner membrane</keyword>
<keyword id="KW-1003">Cell membrane</keyword>
<keyword id="KW-0133">Cell shape</keyword>
<keyword id="KW-0961">Cell wall biogenesis/degradation</keyword>
<keyword id="KW-0328">Glycosyltransferase</keyword>
<keyword id="KW-0472">Membrane</keyword>
<keyword id="KW-0573">Peptidoglycan synthesis</keyword>
<keyword id="KW-1185">Reference proteome</keyword>
<keyword id="KW-0808">Transferase</keyword>
<proteinExistence type="inferred from homology"/>
<name>MURG_BUCAI</name>
<accession>P57311</accession>
<dbReference type="EC" id="2.4.1.227" evidence="1"/>
<dbReference type="EMBL" id="BA000003">
    <property type="protein sequence ID" value="BAB12932.1"/>
    <property type="molecule type" value="Genomic_DNA"/>
</dbReference>
<dbReference type="RefSeq" id="NP_240046.1">
    <property type="nucleotide sequence ID" value="NC_002528.1"/>
</dbReference>
<dbReference type="RefSeq" id="WP_010896008.1">
    <property type="nucleotide sequence ID" value="NZ_AP036055.1"/>
</dbReference>
<dbReference type="SMR" id="P57311"/>
<dbReference type="STRING" id="563178.BUAP5A_212"/>
<dbReference type="CAZy" id="GT28">
    <property type="family name" value="Glycosyltransferase Family 28"/>
</dbReference>
<dbReference type="EnsemblBacteria" id="BAB12932">
    <property type="protein sequence ID" value="BAB12932"/>
    <property type="gene ID" value="BAB12932"/>
</dbReference>
<dbReference type="KEGG" id="buc:BU216"/>
<dbReference type="PATRIC" id="fig|107806.10.peg.229"/>
<dbReference type="eggNOG" id="COG0707">
    <property type="taxonomic scope" value="Bacteria"/>
</dbReference>
<dbReference type="HOGENOM" id="CLU_037404_2_0_6"/>
<dbReference type="UniPathway" id="UPA00219"/>
<dbReference type="Proteomes" id="UP000001806">
    <property type="component" value="Chromosome"/>
</dbReference>
<dbReference type="GO" id="GO:0005886">
    <property type="term" value="C:plasma membrane"/>
    <property type="evidence" value="ECO:0007669"/>
    <property type="project" value="UniProtKB-SubCell"/>
</dbReference>
<dbReference type="GO" id="GO:0051991">
    <property type="term" value="F:UDP-N-acetyl-D-glucosamine:N-acetylmuramoyl-L-alanyl-D-glutamyl-meso-2,6-diaminopimelyl-D-alanyl-D-alanine-diphosphoundecaprenol 4-beta-N-acetylglucosaminlytransferase activity"/>
    <property type="evidence" value="ECO:0007669"/>
    <property type="project" value="RHEA"/>
</dbReference>
<dbReference type="GO" id="GO:0050511">
    <property type="term" value="F:undecaprenyldiphospho-muramoylpentapeptide beta-N-acetylglucosaminyltransferase activity"/>
    <property type="evidence" value="ECO:0007669"/>
    <property type="project" value="UniProtKB-UniRule"/>
</dbReference>
<dbReference type="GO" id="GO:0005975">
    <property type="term" value="P:carbohydrate metabolic process"/>
    <property type="evidence" value="ECO:0007669"/>
    <property type="project" value="InterPro"/>
</dbReference>
<dbReference type="GO" id="GO:0051301">
    <property type="term" value="P:cell division"/>
    <property type="evidence" value="ECO:0007669"/>
    <property type="project" value="UniProtKB-KW"/>
</dbReference>
<dbReference type="GO" id="GO:0071555">
    <property type="term" value="P:cell wall organization"/>
    <property type="evidence" value="ECO:0007669"/>
    <property type="project" value="UniProtKB-KW"/>
</dbReference>
<dbReference type="GO" id="GO:0030259">
    <property type="term" value="P:lipid glycosylation"/>
    <property type="evidence" value="ECO:0007669"/>
    <property type="project" value="UniProtKB-UniRule"/>
</dbReference>
<dbReference type="GO" id="GO:0009252">
    <property type="term" value="P:peptidoglycan biosynthetic process"/>
    <property type="evidence" value="ECO:0007669"/>
    <property type="project" value="UniProtKB-UniRule"/>
</dbReference>
<dbReference type="GO" id="GO:0008360">
    <property type="term" value="P:regulation of cell shape"/>
    <property type="evidence" value="ECO:0007669"/>
    <property type="project" value="UniProtKB-KW"/>
</dbReference>
<dbReference type="CDD" id="cd03785">
    <property type="entry name" value="GT28_MurG"/>
    <property type="match status" value="1"/>
</dbReference>
<dbReference type="Gene3D" id="3.40.50.2000">
    <property type="entry name" value="Glycogen Phosphorylase B"/>
    <property type="match status" value="2"/>
</dbReference>
<dbReference type="HAMAP" id="MF_00033">
    <property type="entry name" value="MurG"/>
    <property type="match status" value="1"/>
</dbReference>
<dbReference type="InterPro" id="IPR006009">
    <property type="entry name" value="GlcNAc_MurG"/>
</dbReference>
<dbReference type="InterPro" id="IPR007235">
    <property type="entry name" value="Glyco_trans_28_C"/>
</dbReference>
<dbReference type="InterPro" id="IPR004276">
    <property type="entry name" value="GlycoTrans_28_N"/>
</dbReference>
<dbReference type="NCBIfam" id="TIGR01133">
    <property type="entry name" value="murG"/>
    <property type="match status" value="1"/>
</dbReference>
<dbReference type="PANTHER" id="PTHR21015:SF22">
    <property type="entry name" value="GLYCOSYLTRANSFERASE"/>
    <property type="match status" value="1"/>
</dbReference>
<dbReference type="PANTHER" id="PTHR21015">
    <property type="entry name" value="UDP-N-ACETYLGLUCOSAMINE--N-ACETYLMURAMYL-(PENTAPEPTIDE) PYROPHOSPHORYL-UNDECAPRENOL N-ACETYLGLUCOSAMINE TRANSFERASE 1"/>
    <property type="match status" value="1"/>
</dbReference>
<dbReference type="Pfam" id="PF04101">
    <property type="entry name" value="Glyco_tran_28_C"/>
    <property type="match status" value="1"/>
</dbReference>
<dbReference type="Pfam" id="PF03033">
    <property type="entry name" value="Glyco_transf_28"/>
    <property type="match status" value="1"/>
</dbReference>
<dbReference type="SUPFAM" id="SSF53756">
    <property type="entry name" value="UDP-Glycosyltransferase/glycogen phosphorylase"/>
    <property type="match status" value="1"/>
</dbReference>
<organism>
    <name type="scientific">Buchnera aphidicola subsp. Acyrthosiphon pisum (strain APS)</name>
    <name type="common">Acyrthosiphon pisum symbiotic bacterium</name>
    <dbReference type="NCBI Taxonomy" id="107806"/>
    <lineage>
        <taxon>Bacteria</taxon>
        <taxon>Pseudomonadati</taxon>
        <taxon>Pseudomonadota</taxon>
        <taxon>Gammaproteobacteria</taxon>
        <taxon>Enterobacterales</taxon>
        <taxon>Erwiniaceae</taxon>
        <taxon>Buchnera</taxon>
    </lineage>
</organism>
<protein>
    <recommendedName>
        <fullName evidence="1">UDP-N-acetylglucosamine--N-acetylmuramyl-(pentapeptide) pyrophosphoryl-undecaprenol N-acetylglucosamine transferase</fullName>
        <ecNumber evidence="1">2.4.1.227</ecNumber>
    </recommendedName>
    <alternativeName>
        <fullName evidence="1">Undecaprenyl-PP-MurNAc-pentapeptide-UDPGlcNAc GlcNAc transferase</fullName>
    </alternativeName>
</protein>
<gene>
    <name evidence="1" type="primary">murG</name>
    <name type="ordered locus">BU216</name>
</gene>
<feature type="chain" id="PRO_0000109153" description="UDP-N-acetylglucosamine--N-acetylmuramyl-(pentapeptide) pyrophosphoryl-undecaprenol N-acetylglucosamine transferase">
    <location>
        <begin position="1"/>
        <end position="354"/>
    </location>
</feature>
<feature type="binding site" evidence="1">
    <location>
        <begin position="13"/>
        <end position="15"/>
    </location>
    <ligand>
        <name>UDP-N-acetyl-alpha-D-glucosamine</name>
        <dbReference type="ChEBI" id="CHEBI:57705"/>
    </ligand>
</feature>
<feature type="binding site" evidence="1">
    <location>
        <position position="125"/>
    </location>
    <ligand>
        <name>UDP-N-acetyl-alpha-D-glucosamine</name>
        <dbReference type="ChEBI" id="CHEBI:57705"/>
    </ligand>
</feature>
<feature type="binding site" evidence="1">
    <location>
        <position position="189"/>
    </location>
    <ligand>
        <name>UDP-N-acetyl-alpha-D-glucosamine</name>
        <dbReference type="ChEBI" id="CHEBI:57705"/>
    </ligand>
</feature>
<feature type="binding site" evidence="1">
    <location>
        <position position="242"/>
    </location>
    <ligand>
        <name>UDP-N-acetyl-alpha-D-glucosamine</name>
        <dbReference type="ChEBI" id="CHEBI:57705"/>
    </ligand>
</feature>
<feature type="binding site" evidence="1">
    <location>
        <begin position="261"/>
        <end position="266"/>
    </location>
    <ligand>
        <name>UDP-N-acetyl-alpha-D-glucosamine</name>
        <dbReference type="ChEBI" id="CHEBI:57705"/>
    </ligand>
</feature>
<feature type="binding site" evidence="1">
    <location>
        <position position="286"/>
    </location>
    <ligand>
        <name>UDP-N-acetyl-alpha-D-glucosamine</name>
        <dbReference type="ChEBI" id="CHEBI:57705"/>
    </ligand>
</feature>
<comment type="function">
    <text evidence="1">Cell wall formation. Catalyzes the transfer of a GlcNAc subunit on undecaprenyl-pyrophosphoryl-MurNAc-pentapeptide (lipid intermediate I) to form undecaprenyl-pyrophosphoryl-MurNAc-(pentapeptide)GlcNAc (lipid intermediate II).</text>
</comment>
<comment type="catalytic activity">
    <reaction evidence="1">
        <text>di-trans,octa-cis-undecaprenyl diphospho-N-acetyl-alpha-D-muramoyl-L-alanyl-D-glutamyl-meso-2,6-diaminopimeloyl-D-alanyl-D-alanine + UDP-N-acetyl-alpha-D-glucosamine = di-trans,octa-cis-undecaprenyl diphospho-[N-acetyl-alpha-D-glucosaminyl-(1-&gt;4)]-N-acetyl-alpha-D-muramoyl-L-alanyl-D-glutamyl-meso-2,6-diaminopimeloyl-D-alanyl-D-alanine + UDP + H(+)</text>
        <dbReference type="Rhea" id="RHEA:31227"/>
        <dbReference type="ChEBI" id="CHEBI:15378"/>
        <dbReference type="ChEBI" id="CHEBI:57705"/>
        <dbReference type="ChEBI" id="CHEBI:58223"/>
        <dbReference type="ChEBI" id="CHEBI:61387"/>
        <dbReference type="ChEBI" id="CHEBI:61388"/>
        <dbReference type="EC" id="2.4.1.227"/>
    </reaction>
</comment>
<comment type="pathway">
    <text evidence="1">Cell wall biogenesis; peptidoglycan biosynthesis.</text>
</comment>
<comment type="subcellular location">
    <subcellularLocation>
        <location evidence="1">Cell inner membrane</location>
        <topology evidence="1">Peripheral membrane protein</topology>
        <orientation evidence="1">Cytoplasmic side</orientation>
    </subcellularLocation>
</comment>
<comment type="similarity">
    <text evidence="1">Belongs to the glycosyltransferase 28 family. MurG subfamily.</text>
</comment>
<evidence type="ECO:0000255" key="1">
    <source>
        <dbReference type="HAMAP-Rule" id="MF_00033"/>
    </source>
</evidence>
<reference key="1">
    <citation type="journal article" date="2000" name="Nature">
        <title>Genome sequence of the endocellular bacterial symbiont of aphids Buchnera sp. APS.</title>
        <authorList>
            <person name="Shigenobu S."/>
            <person name="Watanabe H."/>
            <person name="Hattori M."/>
            <person name="Sakaki Y."/>
            <person name="Ishikawa H."/>
        </authorList>
    </citation>
    <scope>NUCLEOTIDE SEQUENCE [LARGE SCALE GENOMIC DNA]</scope>
    <source>
        <strain>APS</strain>
    </source>
</reference>
<sequence length="354" mass="39500">MIPKKIIIMAGGSGGHVFPGLTIARYLIEKGWLVNWIGTKNSIESRIIPKYGIKIHYISIKGLRNTSLKNLIISPIYILRAYYAVKKIIKTWSPDIVLGMGGYVSGPGGVASWNCNIPLLLHEQNKIAGITNKWLSRISTKNMQASPGVLRNAEVVGNPVCQSIIKVPNPINRFKNRTGLLRVLVIGGSQGSSILNRILPEVSFLLKEKIIFWHQTGNYELEKTKKKYNKLRLNQNLITSFIKNIASAYEWADLIICRSGALTVSEISIVGLGAIFIPYPHKDKQQHRNAEDLELIGAAKIIDQSNLNTKLIVNILNSLDRDKLFIMAKKAHSLGVRDAIFNIFNVINKISKKT</sequence>